<protein>
    <recommendedName>
        <fullName evidence="4">Larval cuticle protein 65Ag1</fullName>
    </recommendedName>
    <alternativeName>
        <fullName evidence="3">Larval cuticle protein 8</fullName>
    </alternativeName>
</protein>
<evidence type="ECO:0000255" key="1">
    <source>
        <dbReference type="PROSITE-ProRule" id="PRU00497"/>
    </source>
</evidence>
<evidence type="ECO:0000269" key="2">
    <source>
    </source>
</evidence>
<evidence type="ECO:0000303" key="3">
    <source>
    </source>
</evidence>
<evidence type="ECO:0000312" key="4">
    <source>
        <dbReference type="FlyBase" id="FBgn0020638"/>
    </source>
</evidence>
<gene>
    <name evidence="4" type="primary">Lcp65Ag1</name>
    <name evidence="3" type="synonym">Lcp-g1</name>
    <name evidence="3" type="synonym">Lcp8</name>
    <name evidence="4" type="ORF">CG10530</name>
</gene>
<name>LCP81_DROME</name>
<organism>
    <name type="scientific">Drosophila melanogaster</name>
    <name type="common">Fruit fly</name>
    <dbReference type="NCBI Taxonomy" id="7227"/>
    <lineage>
        <taxon>Eukaryota</taxon>
        <taxon>Metazoa</taxon>
        <taxon>Ecdysozoa</taxon>
        <taxon>Arthropoda</taxon>
        <taxon>Hexapoda</taxon>
        <taxon>Insecta</taxon>
        <taxon>Pterygota</taxon>
        <taxon>Neoptera</taxon>
        <taxon>Endopterygota</taxon>
        <taxon>Diptera</taxon>
        <taxon>Brachycera</taxon>
        <taxon>Muscomorpha</taxon>
        <taxon>Ephydroidea</taxon>
        <taxon>Drosophilidae</taxon>
        <taxon>Drosophila</taxon>
        <taxon>Sophophora</taxon>
    </lineage>
</organism>
<reference key="1">
    <citation type="journal article" date="1997" name="Genetics">
        <title>A cluster of cuticle genes of Drosophila at 65A: sequence, structure and evolution.</title>
        <authorList>
            <person name="Charles J.-P."/>
            <person name="Chihara C."/>
            <person name="Nejad S."/>
            <person name="Riddiford L.M."/>
        </authorList>
    </citation>
    <scope>NUCLEOTIDE SEQUENCE [GENOMIC DNA]</scope>
    <source>
        <strain>Iso-1</strain>
    </source>
</reference>
<reference key="2">
    <citation type="journal article" date="2000" name="Science">
        <title>The genome sequence of Drosophila melanogaster.</title>
        <authorList>
            <person name="Adams M.D."/>
            <person name="Celniker S.E."/>
            <person name="Holt R.A."/>
            <person name="Evans C.A."/>
            <person name="Gocayne J.D."/>
            <person name="Amanatides P.G."/>
            <person name="Scherer S.E."/>
            <person name="Li P.W."/>
            <person name="Hoskins R.A."/>
            <person name="Galle R.F."/>
            <person name="George R.A."/>
            <person name="Lewis S.E."/>
            <person name="Richards S."/>
            <person name="Ashburner M."/>
            <person name="Henderson S.N."/>
            <person name="Sutton G.G."/>
            <person name="Wortman J.R."/>
            <person name="Yandell M.D."/>
            <person name="Zhang Q."/>
            <person name="Chen L.X."/>
            <person name="Brandon R.C."/>
            <person name="Rogers Y.-H.C."/>
            <person name="Blazej R.G."/>
            <person name="Champe M."/>
            <person name="Pfeiffer B.D."/>
            <person name="Wan K.H."/>
            <person name="Doyle C."/>
            <person name="Baxter E.G."/>
            <person name="Helt G."/>
            <person name="Nelson C.R."/>
            <person name="Miklos G.L.G."/>
            <person name="Abril J.F."/>
            <person name="Agbayani A."/>
            <person name="An H.-J."/>
            <person name="Andrews-Pfannkoch C."/>
            <person name="Baldwin D."/>
            <person name="Ballew R.M."/>
            <person name="Basu A."/>
            <person name="Baxendale J."/>
            <person name="Bayraktaroglu L."/>
            <person name="Beasley E.M."/>
            <person name="Beeson K.Y."/>
            <person name="Benos P.V."/>
            <person name="Berman B.P."/>
            <person name="Bhandari D."/>
            <person name="Bolshakov S."/>
            <person name="Borkova D."/>
            <person name="Botchan M.R."/>
            <person name="Bouck J."/>
            <person name="Brokstein P."/>
            <person name="Brottier P."/>
            <person name="Burtis K.C."/>
            <person name="Busam D.A."/>
            <person name="Butler H."/>
            <person name="Cadieu E."/>
            <person name="Center A."/>
            <person name="Chandra I."/>
            <person name="Cherry J.M."/>
            <person name="Cawley S."/>
            <person name="Dahlke C."/>
            <person name="Davenport L.B."/>
            <person name="Davies P."/>
            <person name="de Pablos B."/>
            <person name="Delcher A."/>
            <person name="Deng Z."/>
            <person name="Mays A.D."/>
            <person name="Dew I."/>
            <person name="Dietz S.M."/>
            <person name="Dodson K."/>
            <person name="Doup L.E."/>
            <person name="Downes M."/>
            <person name="Dugan-Rocha S."/>
            <person name="Dunkov B.C."/>
            <person name="Dunn P."/>
            <person name="Durbin K.J."/>
            <person name="Evangelista C.C."/>
            <person name="Ferraz C."/>
            <person name="Ferriera S."/>
            <person name="Fleischmann W."/>
            <person name="Fosler C."/>
            <person name="Gabrielian A.E."/>
            <person name="Garg N.S."/>
            <person name="Gelbart W.M."/>
            <person name="Glasser K."/>
            <person name="Glodek A."/>
            <person name="Gong F."/>
            <person name="Gorrell J.H."/>
            <person name="Gu Z."/>
            <person name="Guan P."/>
            <person name="Harris M."/>
            <person name="Harris N.L."/>
            <person name="Harvey D.A."/>
            <person name="Heiman T.J."/>
            <person name="Hernandez J.R."/>
            <person name="Houck J."/>
            <person name="Hostin D."/>
            <person name="Houston K.A."/>
            <person name="Howland T.J."/>
            <person name="Wei M.-H."/>
            <person name="Ibegwam C."/>
            <person name="Jalali M."/>
            <person name="Kalush F."/>
            <person name="Karpen G.H."/>
            <person name="Ke Z."/>
            <person name="Kennison J.A."/>
            <person name="Ketchum K.A."/>
            <person name="Kimmel B.E."/>
            <person name="Kodira C.D."/>
            <person name="Kraft C.L."/>
            <person name="Kravitz S."/>
            <person name="Kulp D."/>
            <person name="Lai Z."/>
            <person name="Lasko P."/>
            <person name="Lei Y."/>
            <person name="Levitsky A.A."/>
            <person name="Li J.H."/>
            <person name="Li Z."/>
            <person name="Liang Y."/>
            <person name="Lin X."/>
            <person name="Liu X."/>
            <person name="Mattei B."/>
            <person name="McIntosh T.C."/>
            <person name="McLeod M.P."/>
            <person name="McPherson D."/>
            <person name="Merkulov G."/>
            <person name="Milshina N.V."/>
            <person name="Mobarry C."/>
            <person name="Morris J."/>
            <person name="Moshrefi A."/>
            <person name="Mount S.M."/>
            <person name="Moy M."/>
            <person name="Murphy B."/>
            <person name="Murphy L."/>
            <person name="Muzny D.M."/>
            <person name="Nelson D.L."/>
            <person name="Nelson D.R."/>
            <person name="Nelson K.A."/>
            <person name="Nixon K."/>
            <person name="Nusskern D.R."/>
            <person name="Pacleb J.M."/>
            <person name="Palazzolo M."/>
            <person name="Pittman G.S."/>
            <person name="Pan S."/>
            <person name="Pollard J."/>
            <person name="Puri V."/>
            <person name="Reese M.G."/>
            <person name="Reinert K."/>
            <person name="Remington K."/>
            <person name="Saunders R.D.C."/>
            <person name="Scheeler F."/>
            <person name="Shen H."/>
            <person name="Shue B.C."/>
            <person name="Siden-Kiamos I."/>
            <person name="Simpson M."/>
            <person name="Skupski M.P."/>
            <person name="Smith T.J."/>
            <person name="Spier E."/>
            <person name="Spradling A.C."/>
            <person name="Stapleton M."/>
            <person name="Strong R."/>
            <person name="Sun E."/>
            <person name="Svirskas R."/>
            <person name="Tector C."/>
            <person name="Turner R."/>
            <person name="Venter E."/>
            <person name="Wang A.H."/>
            <person name="Wang X."/>
            <person name="Wang Z.-Y."/>
            <person name="Wassarman D.A."/>
            <person name="Weinstock G.M."/>
            <person name="Weissenbach J."/>
            <person name="Williams S.M."/>
            <person name="Woodage T."/>
            <person name="Worley K.C."/>
            <person name="Wu D."/>
            <person name="Yang S."/>
            <person name="Yao Q.A."/>
            <person name="Ye J."/>
            <person name="Yeh R.-F."/>
            <person name="Zaveri J.S."/>
            <person name="Zhan M."/>
            <person name="Zhang G."/>
            <person name="Zhao Q."/>
            <person name="Zheng L."/>
            <person name="Zheng X.H."/>
            <person name="Zhong F.N."/>
            <person name="Zhong W."/>
            <person name="Zhou X."/>
            <person name="Zhu S.C."/>
            <person name="Zhu X."/>
            <person name="Smith H.O."/>
            <person name="Gibbs R.A."/>
            <person name="Myers E.W."/>
            <person name="Rubin G.M."/>
            <person name="Venter J.C."/>
        </authorList>
    </citation>
    <scope>NUCLEOTIDE SEQUENCE [LARGE SCALE GENOMIC DNA]</scope>
    <source>
        <strain>Berkeley</strain>
    </source>
</reference>
<reference key="3">
    <citation type="journal article" date="2002" name="Genome Biol.">
        <title>Annotation of the Drosophila melanogaster euchromatic genome: a systematic review.</title>
        <authorList>
            <person name="Misra S."/>
            <person name="Crosby M.A."/>
            <person name="Mungall C.J."/>
            <person name="Matthews B.B."/>
            <person name="Campbell K.S."/>
            <person name="Hradecky P."/>
            <person name="Huang Y."/>
            <person name="Kaminker J.S."/>
            <person name="Millburn G.H."/>
            <person name="Prochnik S.E."/>
            <person name="Smith C.D."/>
            <person name="Tupy J.L."/>
            <person name="Whitfield E.J."/>
            <person name="Bayraktaroglu L."/>
            <person name="Berman B.P."/>
            <person name="Bettencourt B.R."/>
            <person name="Celniker S.E."/>
            <person name="de Grey A.D.N.J."/>
            <person name="Drysdale R.A."/>
            <person name="Harris N.L."/>
            <person name="Richter J."/>
            <person name="Russo S."/>
            <person name="Schroeder A.J."/>
            <person name="Shu S.Q."/>
            <person name="Stapleton M."/>
            <person name="Yamada C."/>
            <person name="Ashburner M."/>
            <person name="Gelbart W.M."/>
            <person name="Rubin G.M."/>
            <person name="Lewis S.E."/>
        </authorList>
    </citation>
    <scope>GENOME REANNOTATION</scope>
    <source>
        <strain>Berkeley</strain>
    </source>
</reference>
<reference key="4">
    <citation type="journal article" date="2002" name="Genome Biol.">
        <title>A Drosophila full-length cDNA resource.</title>
        <authorList>
            <person name="Stapleton M."/>
            <person name="Carlson J.W."/>
            <person name="Brokstein P."/>
            <person name="Yu C."/>
            <person name="Champe M."/>
            <person name="George R.A."/>
            <person name="Guarin H."/>
            <person name="Kronmiller B."/>
            <person name="Pacleb J.M."/>
            <person name="Park S."/>
            <person name="Wan K.H."/>
            <person name="Rubin G.M."/>
            <person name="Celniker S.E."/>
        </authorList>
    </citation>
    <scope>NUCLEOTIDE SEQUENCE [LARGE SCALE MRNA]</scope>
    <source>
        <strain>Berkeley</strain>
    </source>
</reference>
<reference key="5">
    <citation type="journal article" date="1998" name="Insect Biochem. Mol. Biol.">
        <title>Identification of proteins and developmental expression of RNAs encoded by the 65A cuticle protein gene cluster in Drosophila melanogaster.</title>
        <authorList>
            <person name="Charles J.-P."/>
            <person name="Chihara C."/>
            <person name="Nejad S."/>
            <person name="Riddiford L.M."/>
        </authorList>
    </citation>
    <scope>PROTEIN SEQUENCE OF 19-28</scope>
    <scope>FUNCTION</scope>
    <scope>DEVELOPMENTAL STAGE</scope>
    <source>
        <strain>Oregon-R</strain>
        <tissue>Larva</tissue>
    </source>
</reference>
<dbReference type="EMBL" id="U84753">
    <property type="protein sequence ID" value="AAB88071.1"/>
    <property type="molecule type" value="Genomic_DNA"/>
</dbReference>
<dbReference type="EMBL" id="AE014296">
    <property type="protein sequence ID" value="AAF50692.1"/>
    <property type="molecule type" value="Genomic_DNA"/>
</dbReference>
<dbReference type="EMBL" id="AY061536">
    <property type="protein sequence ID" value="AAL29084.1"/>
    <property type="molecule type" value="mRNA"/>
</dbReference>
<dbReference type="RefSeq" id="NP_477273.1">
    <property type="nucleotide sequence ID" value="NM_057925.3"/>
</dbReference>
<dbReference type="FunCoup" id="C0HL64">
    <property type="interactions" value="7"/>
</dbReference>
<dbReference type="STRING" id="7227.FBpp0076766"/>
<dbReference type="PaxDb" id="7227-FBpp0076766"/>
<dbReference type="DNASU" id="38703"/>
<dbReference type="EnsemblMetazoa" id="FBtr0077058">
    <property type="protein sequence ID" value="FBpp0076766"/>
    <property type="gene ID" value="FBgn0020638"/>
</dbReference>
<dbReference type="EnsemblMetazoa" id="FBtr0077059">
    <property type="protein sequence ID" value="FBpp0076767"/>
    <property type="gene ID" value="FBgn0020637"/>
</dbReference>
<dbReference type="GeneID" id="38702"/>
<dbReference type="GeneID" id="38703"/>
<dbReference type="KEGG" id="dme:Dmel_CG10530"/>
<dbReference type="KEGG" id="dme:Dmel_CG10534"/>
<dbReference type="AGR" id="FB:FBgn0020638"/>
<dbReference type="CTD" id="38702"/>
<dbReference type="CTD" id="38703"/>
<dbReference type="FlyBase" id="FBgn0020638">
    <property type="gene designation" value="Lcp65Ag1"/>
</dbReference>
<dbReference type="VEuPathDB" id="VectorBase:FBgn0020637"/>
<dbReference type="VEuPathDB" id="VectorBase:FBgn0020638"/>
<dbReference type="InParanoid" id="C0HL64"/>
<dbReference type="OMA" id="FQYAWET"/>
<dbReference type="OrthoDB" id="7255276at2759"/>
<dbReference type="PRO" id="PR:C0HL64"/>
<dbReference type="Proteomes" id="UP000000803">
    <property type="component" value="Chromosome 3L"/>
</dbReference>
<dbReference type="Bgee" id="FBgn0020637">
    <property type="expression patterns" value="Expressed in adult tracheocyte (Drosophila) in post-embryonic organism and 12 other cell types or tissues"/>
</dbReference>
<dbReference type="ExpressionAtlas" id="C0HL64">
    <property type="expression patterns" value="baseline and differential"/>
</dbReference>
<dbReference type="GO" id="GO:0062129">
    <property type="term" value="C:chitin-based extracellular matrix"/>
    <property type="evidence" value="ECO:0000255"/>
    <property type="project" value="FlyBase"/>
</dbReference>
<dbReference type="GO" id="GO:0005576">
    <property type="term" value="C:extracellular region"/>
    <property type="evidence" value="ECO:0000303"/>
    <property type="project" value="UniProtKB"/>
</dbReference>
<dbReference type="GO" id="GO:0008010">
    <property type="term" value="F:structural constituent of chitin-based larval cuticle"/>
    <property type="evidence" value="ECO:0000255"/>
    <property type="project" value="FlyBase"/>
</dbReference>
<dbReference type="GO" id="GO:0040003">
    <property type="term" value="P:chitin-based cuticle development"/>
    <property type="evidence" value="ECO:0000255"/>
    <property type="project" value="FlyBase"/>
</dbReference>
<dbReference type="GO" id="GO:0008363">
    <property type="term" value="P:larval chitin-based cuticle development"/>
    <property type="evidence" value="ECO:0000303"/>
    <property type="project" value="UniProtKB"/>
</dbReference>
<dbReference type="InterPro" id="IPR031311">
    <property type="entry name" value="CHIT_BIND_RR_consensus"/>
</dbReference>
<dbReference type="InterPro" id="IPR050468">
    <property type="entry name" value="Cuticle_Struct_Prot"/>
</dbReference>
<dbReference type="InterPro" id="IPR000618">
    <property type="entry name" value="Insect_cuticle"/>
</dbReference>
<dbReference type="PANTHER" id="PTHR10380:SF218">
    <property type="entry name" value="ADULT CUTICLE PROTEIN 65AA-RELATED"/>
    <property type="match status" value="1"/>
</dbReference>
<dbReference type="PANTHER" id="PTHR10380">
    <property type="entry name" value="CUTICLE PROTEIN"/>
    <property type="match status" value="1"/>
</dbReference>
<dbReference type="Pfam" id="PF00379">
    <property type="entry name" value="Chitin_bind_4"/>
    <property type="match status" value="1"/>
</dbReference>
<dbReference type="PRINTS" id="PR00947">
    <property type="entry name" value="CUTICLE"/>
</dbReference>
<dbReference type="PROSITE" id="PS00233">
    <property type="entry name" value="CHIT_BIND_RR_1"/>
    <property type="match status" value="1"/>
</dbReference>
<dbReference type="PROSITE" id="PS51155">
    <property type="entry name" value="CHIT_BIND_RR_2"/>
    <property type="match status" value="1"/>
</dbReference>
<proteinExistence type="evidence at protein level"/>
<sequence>MKFLIVFVALFAVALAAPAAEEPTIVRSESDVGPESFKYDWETSDGQAAQAVGQLNDIGTENEAISVSGSYRFIADDGQTYQVNYIADKNGFQPQGAHLPVAPVA</sequence>
<accession>C0HL64</accession>
<accession>P92201</accession>
<keyword id="KW-0193">Cuticle</keyword>
<keyword id="KW-0903">Direct protein sequencing</keyword>
<keyword id="KW-1185">Reference proteome</keyword>
<keyword id="KW-0732">Signal</keyword>
<feature type="signal peptide" evidence="2">
    <location>
        <begin position="1"/>
        <end position="18"/>
    </location>
</feature>
<feature type="chain" id="PRO_0000006395" description="Larval cuticle protein 65Ag1">
    <location>
        <begin position="19"/>
        <end position="105"/>
    </location>
</feature>
<feature type="domain" description="Chitin-binding type R&amp;R" evidence="1">
    <location>
        <begin position="34"/>
        <end position="103"/>
    </location>
</feature>
<comment type="function">
    <text evidence="2">Component of the cuticle of the larva.</text>
</comment>
<comment type="developmental stage">
    <text evidence="2">Expression begins in late embryo and end late third larval instar. Maximal expression is at the end of the first larval instar.</text>
</comment>